<feature type="chain" id="PRO_0000263254" description="Peptide chain release factor 1">
    <location>
        <begin position="1"/>
        <end position="361"/>
    </location>
</feature>
<feature type="modified residue" description="N5-methylglutamine" evidence="1">
    <location>
        <position position="237"/>
    </location>
</feature>
<keyword id="KW-0963">Cytoplasm</keyword>
<keyword id="KW-0488">Methylation</keyword>
<keyword id="KW-0648">Protein biosynthesis</keyword>
<keyword id="KW-1185">Reference proteome</keyword>
<evidence type="ECO:0000255" key="1">
    <source>
        <dbReference type="HAMAP-Rule" id="MF_00093"/>
    </source>
</evidence>
<accession>Q1QXC6</accession>
<protein>
    <recommendedName>
        <fullName evidence="1">Peptide chain release factor 1</fullName>
        <shortName evidence="1">RF-1</shortName>
    </recommendedName>
</protein>
<dbReference type="EMBL" id="CP000285">
    <property type="protein sequence ID" value="ABE58882.1"/>
    <property type="molecule type" value="Genomic_DNA"/>
</dbReference>
<dbReference type="RefSeq" id="WP_011506828.1">
    <property type="nucleotide sequence ID" value="NC_007963.1"/>
</dbReference>
<dbReference type="SMR" id="Q1QXC6"/>
<dbReference type="STRING" id="290398.Csal_1529"/>
<dbReference type="GeneID" id="95334260"/>
<dbReference type="KEGG" id="csa:Csal_1529"/>
<dbReference type="eggNOG" id="COG0216">
    <property type="taxonomic scope" value="Bacteria"/>
</dbReference>
<dbReference type="HOGENOM" id="CLU_036856_0_1_6"/>
<dbReference type="OrthoDB" id="9806673at2"/>
<dbReference type="Proteomes" id="UP000000239">
    <property type="component" value="Chromosome"/>
</dbReference>
<dbReference type="GO" id="GO:0005737">
    <property type="term" value="C:cytoplasm"/>
    <property type="evidence" value="ECO:0007669"/>
    <property type="project" value="UniProtKB-SubCell"/>
</dbReference>
<dbReference type="GO" id="GO:0016149">
    <property type="term" value="F:translation release factor activity, codon specific"/>
    <property type="evidence" value="ECO:0007669"/>
    <property type="project" value="UniProtKB-UniRule"/>
</dbReference>
<dbReference type="FunFam" id="3.30.160.20:FF:000004">
    <property type="entry name" value="Peptide chain release factor 1"/>
    <property type="match status" value="1"/>
</dbReference>
<dbReference type="FunFam" id="3.30.70.1660:FF:000002">
    <property type="entry name" value="Peptide chain release factor 1"/>
    <property type="match status" value="1"/>
</dbReference>
<dbReference type="FunFam" id="3.30.70.1660:FF:000004">
    <property type="entry name" value="Peptide chain release factor 1"/>
    <property type="match status" value="1"/>
</dbReference>
<dbReference type="Gene3D" id="3.30.160.20">
    <property type="match status" value="1"/>
</dbReference>
<dbReference type="Gene3D" id="3.30.70.1660">
    <property type="match status" value="2"/>
</dbReference>
<dbReference type="Gene3D" id="6.10.140.1950">
    <property type="match status" value="1"/>
</dbReference>
<dbReference type="HAMAP" id="MF_00093">
    <property type="entry name" value="Rel_fac_1"/>
    <property type="match status" value="1"/>
</dbReference>
<dbReference type="InterPro" id="IPR005139">
    <property type="entry name" value="PCRF"/>
</dbReference>
<dbReference type="InterPro" id="IPR000352">
    <property type="entry name" value="Pep_chain_release_fac_I"/>
</dbReference>
<dbReference type="InterPro" id="IPR045853">
    <property type="entry name" value="Pep_chain_release_fac_I_sf"/>
</dbReference>
<dbReference type="InterPro" id="IPR050057">
    <property type="entry name" value="Prokaryotic/Mito_RF"/>
</dbReference>
<dbReference type="InterPro" id="IPR004373">
    <property type="entry name" value="RF-1"/>
</dbReference>
<dbReference type="NCBIfam" id="TIGR00019">
    <property type="entry name" value="prfA"/>
    <property type="match status" value="1"/>
</dbReference>
<dbReference type="NCBIfam" id="NF001859">
    <property type="entry name" value="PRK00591.1"/>
    <property type="match status" value="1"/>
</dbReference>
<dbReference type="PANTHER" id="PTHR43804">
    <property type="entry name" value="LD18447P"/>
    <property type="match status" value="1"/>
</dbReference>
<dbReference type="PANTHER" id="PTHR43804:SF7">
    <property type="entry name" value="LD18447P"/>
    <property type="match status" value="1"/>
</dbReference>
<dbReference type="Pfam" id="PF03462">
    <property type="entry name" value="PCRF"/>
    <property type="match status" value="1"/>
</dbReference>
<dbReference type="Pfam" id="PF00472">
    <property type="entry name" value="RF-1"/>
    <property type="match status" value="1"/>
</dbReference>
<dbReference type="SMART" id="SM00937">
    <property type="entry name" value="PCRF"/>
    <property type="match status" value="1"/>
</dbReference>
<dbReference type="SUPFAM" id="SSF75620">
    <property type="entry name" value="Release factor"/>
    <property type="match status" value="1"/>
</dbReference>
<dbReference type="PROSITE" id="PS00745">
    <property type="entry name" value="RF_PROK_I"/>
    <property type="match status" value="1"/>
</dbReference>
<reference key="1">
    <citation type="journal article" date="2011" name="Stand. Genomic Sci.">
        <title>Complete genome sequence of the halophilic and highly halotolerant Chromohalobacter salexigens type strain (1H11(T)).</title>
        <authorList>
            <person name="Copeland A."/>
            <person name="O'Connor K."/>
            <person name="Lucas S."/>
            <person name="Lapidus A."/>
            <person name="Berry K.W."/>
            <person name="Detter J.C."/>
            <person name="Del Rio T.G."/>
            <person name="Hammon N."/>
            <person name="Dalin E."/>
            <person name="Tice H."/>
            <person name="Pitluck S."/>
            <person name="Bruce D."/>
            <person name="Goodwin L."/>
            <person name="Han C."/>
            <person name="Tapia R."/>
            <person name="Saunders E."/>
            <person name="Schmutz J."/>
            <person name="Brettin T."/>
            <person name="Larimer F."/>
            <person name="Land M."/>
            <person name="Hauser L."/>
            <person name="Vargas C."/>
            <person name="Nieto J.J."/>
            <person name="Kyrpides N.C."/>
            <person name="Ivanova N."/>
            <person name="Goker M."/>
            <person name="Klenk H.P."/>
            <person name="Csonka L.N."/>
            <person name="Woyke T."/>
        </authorList>
    </citation>
    <scope>NUCLEOTIDE SEQUENCE [LARGE SCALE GENOMIC DNA]</scope>
    <source>
        <strain>ATCC BAA-138 / DSM 3043 / CIP 106854 / NCIMB 13768 / 1H11</strain>
    </source>
</reference>
<comment type="function">
    <text evidence="1">Peptide chain release factor 1 directs the termination of translation in response to the peptide chain termination codons UAG and UAA.</text>
</comment>
<comment type="subcellular location">
    <subcellularLocation>
        <location evidence="1">Cytoplasm</location>
    </subcellularLocation>
</comment>
<comment type="PTM">
    <text evidence="1">Methylated by PrmC. Methylation increases the termination efficiency of RF1.</text>
</comment>
<comment type="similarity">
    <text evidence="1">Belongs to the prokaryotic/mitochondrial release factor family.</text>
</comment>
<name>RF1_CHRSD</name>
<proteinExistence type="inferred from homology"/>
<sequence length="361" mass="40561">MKATLRTRLDGFQERFEELAALLAEPDVIADQARFRDYSREYAELEPLIEAWRSYRRTEDDLEAAEQMREDSDPEMRELAEEEWREAQARLEALDADVKRLLVPRDPDDASNVFLEIRAGTGGDEAALFAGDLFRMYSRYAEKVGWRIEVINASHGEQGGYKELIARVRGDNVYARLKFESGAHRVQRVPATESQGRIHTSACTVAVMAEASAVGEVELNSNDLRVDTFRSSGAGGQHVNTTDSAIRITHLPSGLVVECQEERSQHKNRAKAMALLAARLKQSAVDAQRQQQADTRRSLVGSGDRSERIRTYNFPQGRITDHRINLTLYKLGDVMAGELGEVIDPLIHEYQAEQLSALQAS</sequence>
<organism>
    <name type="scientific">Chromohalobacter salexigens (strain ATCC BAA-138 / DSM 3043 / CIP 106854 / NCIMB 13768 / 1H11)</name>
    <dbReference type="NCBI Taxonomy" id="290398"/>
    <lineage>
        <taxon>Bacteria</taxon>
        <taxon>Pseudomonadati</taxon>
        <taxon>Pseudomonadota</taxon>
        <taxon>Gammaproteobacteria</taxon>
        <taxon>Oceanospirillales</taxon>
        <taxon>Halomonadaceae</taxon>
        <taxon>Chromohalobacter</taxon>
    </lineage>
</organism>
<gene>
    <name evidence="1" type="primary">prfA</name>
    <name type="ordered locus">Csal_1529</name>
</gene>